<comment type="function">
    <text evidence="1">Possible regulatory or functional link with the histocompatibility cluster.</text>
</comment>
<comment type="domain">
    <text>In contrast to other GTP-binding proteins, this family is characterized by a circular permutation of the GTPase motifs described by a G4-G1-G3 pattern.</text>
</comment>
<comment type="similarity">
    <text evidence="4">Belongs to the TRAFAC class YlqF/YawG GTPase family.</text>
</comment>
<feature type="chain" id="PRO_0000295689" description="Guanine nucleotide-binding protein-like 1">
    <location>
        <begin position="1"/>
        <end position="607"/>
    </location>
</feature>
<feature type="domain" description="CP-type G" evidence="4">
    <location>
        <begin position="178"/>
        <end position="418"/>
    </location>
</feature>
<feature type="region of interest" description="Disordered" evidence="5">
    <location>
        <begin position="1"/>
        <end position="81"/>
    </location>
</feature>
<feature type="region of interest" description="Disordered" evidence="5">
    <location>
        <begin position="547"/>
        <end position="607"/>
    </location>
</feature>
<feature type="compositionally biased region" description="Basic residues" evidence="5">
    <location>
        <begin position="1"/>
        <end position="14"/>
    </location>
</feature>
<feature type="compositionally biased region" description="Basic and acidic residues" evidence="5">
    <location>
        <begin position="15"/>
        <end position="26"/>
    </location>
</feature>
<feature type="compositionally biased region" description="Acidic residues" evidence="5">
    <location>
        <begin position="550"/>
        <end position="584"/>
    </location>
</feature>
<feature type="binding site" evidence="3">
    <location>
        <begin position="225"/>
        <end position="228"/>
    </location>
    <ligand>
        <name>GTP</name>
        <dbReference type="ChEBI" id="CHEBI:37565"/>
    </ligand>
</feature>
<feature type="binding site" evidence="3">
    <location>
        <begin position="367"/>
        <end position="374"/>
    </location>
    <ligand>
        <name>GTP</name>
        <dbReference type="ChEBI" id="CHEBI:37565"/>
    </ligand>
</feature>
<feature type="binding site" evidence="3">
    <location>
        <begin position="411"/>
        <end position="415"/>
    </location>
    <ligand>
        <name>GTP</name>
        <dbReference type="ChEBI" id="CHEBI:37565"/>
    </ligand>
</feature>
<feature type="modified residue" description="Phosphoserine" evidence="2">
    <location>
        <position position="32"/>
    </location>
</feature>
<feature type="modified residue" description="Phosphoserine" evidence="2">
    <location>
        <position position="33"/>
    </location>
</feature>
<feature type="modified residue" description="Phosphoserine" evidence="2">
    <location>
        <position position="34"/>
    </location>
</feature>
<feature type="modified residue" description="Phosphothreonine" evidence="2">
    <location>
        <position position="48"/>
    </location>
</feature>
<feature type="modified residue" description="Phosphothreonine" evidence="2">
    <location>
        <position position="50"/>
    </location>
</feature>
<feature type="modified residue" description="Phosphoserine" evidence="2">
    <location>
        <position position="51"/>
    </location>
</feature>
<feature type="modified residue" description="Phosphoserine" evidence="2">
    <location>
        <position position="68"/>
    </location>
</feature>
<feature type="modified residue" description="Phosphoserine" evidence="2">
    <location>
        <position position="324"/>
    </location>
</feature>
<feature type="modified residue" description="Phosphoserine" evidence="2">
    <location>
        <position position="561"/>
    </location>
</feature>
<feature type="modified residue" description="Phosphoserine" evidence="2">
    <location>
        <position position="562"/>
    </location>
</feature>
<feature type="modified residue" description="Phosphoserine" evidence="2">
    <location>
        <position position="563"/>
    </location>
</feature>
<organism>
    <name type="scientific">Macaca mulatta</name>
    <name type="common">Rhesus macaque</name>
    <dbReference type="NCBI Taxonomy" id="9544"/>
    <lineage>
        <taxon>Eukaryota</taxon>
        <taxon>Metazoa</taxon>
        <taxon>Chordata</taxon>
        <taxon>Craniata</taxon>
        <taxon>Vertebrata</taxon>
        <taxon>Euteleostomi</taxon>
        <taxon>Mammalia</taxon>
        <taxon>Eutheria</taxon>
        <taxon>Euarchontoglires</taxon>
        <taxon>Primates</taxon>
        <taxon>Haplorrhini</taxon>
        <taxon>Catarrhini</taxon>
        <taxon>Cercopithecidae</taxon>
        <taxon>Cercopithecinae</taxon>
        <taxon>Macaca</taxon>
    </lineage>
</organism>
<gene>
    <name type="primary">GNL1</name>
</gene>
<dbReference type="EMBL" id="AB128049">
    <property type="protein sequence ID" value="BAD69767.1"/>
    <property type="molecule type" value="Genomic_DNA"/>
</dbReference>
<dbReference type="RefSeq" id="NP_001040604.1">
    <property type="nucleotide sequence ID" value="NM_001047139.1"/>
</dbReference>
<dbReference type="FunCoup" id="Q5TM59">
    <property type="interactions" value="1303"/>
</dbReference>
<dbReference type="STRING" id="9544.ENSMMUP00000030533"/>
<dbReference type="PaxDb" id="9544-ENSMMUP00000034184"/>
<dbReference type="Ensembl" id="ENSMMUT00000032630.4">
    <property type="protein sequence ID" value="ENSMMUP00000030533.4"/>
    <property type="gene ID" value="ENSMMUG00000020077.4"/>
</dbReference>
<dbReference type="GeneID" id="713303"/>
<dbReference type="KEGG" id="mcc:713303"/>
<dbReference type="CTD" id="2794"/>
<dbReference type="VEuPathDB" id="HostDB:ENSMMUG00000020077"/>
<dbReference type="VGNC" id="VGNC:104402">
    <property type="gene designation" value="GNL1"/>
</dbReference>
<dbReference type="eggNOG" id="KOG1424">
    <property type="taxonomic scope" value="Eukaryota"/>
</dbReference>
<dbReference type="GeneTree" id="ENSGT00940000158047"/>
<dbReference type="HOGENOM" id="CLU_013649_1_1_1"/>
<dbReference type="InParanoid" id="Q5TM59"/>
<dbReference type="OMA" id="CDFPVRP"/>
<dbReference type="OrthoDB" id="391988at2759"/>
<dbReference type="TreeFam" id="TF324569"/>
<dbReference type="Proteomes" id="UP000006718">
    <property type="component" value="Chromosome 4"/>
</dbReference>
<dbReference type="Bgee" id="ENSMMUG00000020077">
    <property type="expression patterns" value="Expressed in primary visual cortex and 21 other cell types or tissues"/>
</dbReference>
<dbReference type="ExpressionAtlas" id="Q5TM59">
    <property type="expression patterns" value="baseline"/>
</dbReference>
<dbReference type="GO" id="GO:0005525">
    <property type="term" value="F:GTP binding"/>
    <property type="evidence" value="ECO:0007669"/>
    <property type="project" value="UniProtKB-KW"/>
</dbReference>
<dbReference type="GO" id="GO:0003924">
    <property type="term" value="F:GTPase activity"/>
    <property type="evidence" value="ECO:0000318"/>
    <property type="project" value="GO_Central"/>
</dbReference>
<dbReference type="GO" id="GO:0006974">
    <property type="term" value="P:DNA damage response"/>
    <property type="evidence" value="ECO:0007669"/>
    <property type="project" value="Ensembl"/>
</dbReference>
<dbReference type="CDD" id="cd01857">
    <property type="entry name" value="HSR1_MMR1"/>
    <property type="match status" value="1"/>
</dbReference>
<dbReference type="Gene3D" id="3.40.50.300">
    <property type="entry name" value="P-loop containing nucleotide triphosphate hydrolases"/>
    <property type="match status" value="1"/>
</dbReference>
<dbReference type="InterPro" id="IPR030378">
    <property type="entry name" value="G_CP_dom"/>
</dbReference>
<dbReference type="InterPro" id="IPR043358">
    <property type="entry name" value="GNL1-like"/>
</dbReference>
<dbReference type="InterPro" id="IPR006073">
    <property type="entry name" value="GTP-bd"/>
</dbReference>
<dbReference type="InterPro" id="IPR027417">
    <property type="entry name" value="P-loop_NTPase"/>
</dbReference>
<dbReference type="PANTHER" id="PTHR45709:SF3">
    <property type="entry name" value="GUANINE NUCLEOTIDE-BINDING PROTEIN-LIKE 1"/>
    <property type="match status" value="1"/>
</dbReference>
<dbReference type="PANTHER" id="PTHR45709">
    <property type="entry name" value="LARGE SUBUNIT GTPASE 1 HOMOLOG-RELATED"/>
    <property type="match status" value="1"/>
</dbReference>
<dbReference type="Pfam" id="PF01926">
    <property type="entry name" value="MMR_HSR1"/>
    <property type="match status" value="1"/>
</dbReference>
<dbReference type="SUPFAM" id="SSF52540">
    <property type="entry name" value="P-loop containing nucleoside triphosphate hydrolases"/>
    <property type="match status" value="1"/>
</dbReference>
<dbReference type="PROSITE" id="PS51721">
    <property type="entry name" value="G_CP"/>
    <property type="match status" value="1"/>
</dbReference>
<keyword id="KW-0342">GTP-binding</keyword>
<keyword id="KW-0547">Nucleotide-binding</keyword>
<keyword id="KW-0597">Phosphoprotein</keyword>
<keyword id="KW-1185">Reference proteome</keyword>
<name>GNL1_MACMU</name>
<evidence type="ECO:0000250" key="1"/>
<evidence type="ECO:0000250" key="2">
    <source>
        <dbReference type="UniProtKB" id="P36915"/>
    </source>
</evidence>
<evidence type="ECO:0000255" key="3"/>
<evidence type="ECO:0000255" key="4">
    <source>
        <dbReference type="PROSITE-ProRule" id="PRU01058"/>
    </source>
</evidence>
<evidence type="ECO:0000256" key="5">
    <source>
        <dbReference type="SAM" id="MobiDB-lite"/>
    </source>
</evidence>
<proteinExistence type="inferred from homology"/>
<protein>
    <recommendedName>
        <fullName>Guanine nucleotide-binding protein-like 1</fullName>
    </recommendedName>
</protein>
<sequence>MPRKKPFSVKQKKKQLQDKRERKRGLQDGLRSSSNSRSGSRERREEQTDTSDGESVTHHIRRLNQQPSQGLGPRGYDPNRYRLHFERDSREEVERRKRAAREQVLQPVSAEVLELDIREVYQPGSVLDFPRRPPWSYEMSKEQLMSQEERSFQEYLGKIHGAYSSEKLSYFEHNLETWRQLWRVLEMSDIVLLITDIRHPVVNFPPALYEYVTGELGLALVLVLNKVDLAPPALVVAWKHYFHQHYPQLHVVLFTSFPRDPRTPQDPSSVLKKSRRRGRGWTRALGPEQLLRACEAITVGKVDLSSWREKIARDVAGATWGNGSGEEEEEDDGPAVLVEQQTDSAMEPTGPTRERYKDGVVTIGCVGFPNVGKSSLINGLVGRKVVSVSRTPGHTRYFQTYFLTPSVKLCDCPGLIFPSLLPRQLQVLAGIYPIAQIQEPYTAVGYLASRIPVQALLHLRHPEAEDPSAEHPWCAWDICEAWAEKRGYKTAKAARNDVYRAANSLLRLAVDGRLSLCFHPPGYSEQKGTWESHPETTELVVLQGRVGPAGDEEEEEEEELSSSCEEEGEEDRDADEEGEGDEDTPTSAPGSSLAGRNPYALLGEDEC</sequence>
<reference key="1">
    <citation type="journal article" date="2004" name="Mol. Biol. Evol.">
        <title>Rhesus macaque class I duplicon structures, organization, and evolution within the alpha block of the major histocompatibility complex.</title>
        <authorList>
            <person name="Kulski J.K."/>
            <person name="Anzai T."/>
            <person name="Shiina T."/>
            <person name="Inoko H."/>
        </authorList>
    </citation>
    <scope>NUCLEOTIDE SEQUENCE [LARGE SCALE GENOMIC DNA]</scope>
</reference>
<accession>Q5TM59</accession>